<name>Y1031_SACS2</name>
<dbReference type="EMBL" id="AE006641">
    <property type="protein sequence ID" value="AAK41294.1"/>
    <property type="molecule type" value="Genomic_DNA"/>
</dbReference>
<dbReference type="PIR" id="G90254">
    <property type="entry name" value="G90254"/>
</dbReference>
<dbReference type="SMR" id="Q97Z99"/>
<dbReference type="FunCoup" id="Q97Z99">
    <property type="interactions" value="30"/>
</dbReference>
<dbReference type="STRING" id="273057.SSO1031"/>
<dbReference type="PaxDb" id="273057-SSO1031"/>
<dbReference type="EnsemblBacteria" id="AAK41294">
    <property type="protein sequence ID" value="AAK41294"/>
    <property type="gene ID" value="SSO1031"/>
</dbReference>
<dbReference type="KEGG" id="sso:SSO1031"/>
<dbReference type="PATRIC" id="fig|273057.12.peg.1023"/>
<dbReference type="eggNOG" id="arCOG00219">
    <property type="taxonomic scope" value="Archaea"/>
</dbReference>
<dbReference type="HOGENOM" id="CLU_793701_0_0_2"/>
<dbReference type="InParanoid" id="Q97Z99"/>
<dbReference type="PhylomeDB" id="Q97Z99"/>
<dbReference type="Proteomes" id="UP000001974">
    <property type="component" value="Chromosome"/>
</dbReference>
<dbReference type="GO" id="GO:0030973">
    <property type="term" value="F:molybdate ion binding"/>
    <property type="evidence" value="ECO:0000318"/>
    <property type="project" value="GO_Central"/>
</dbReference>
<dbReference type="GO" id="GO:0015689">
    <property type="term" value="P:molybdate ion transport"/>
    <property type="evidence" value="ECO:0000318"/>
    <property type="project" value="GO_Central"/>
</dbReference>
<dbReference type="CDD" id="cd13540">
    <property type="entry name" value="PBP2_ModA_WtpA"/>
    <property type="match status" value="1"/>
</dbReference>
<dbReference type="Gene3D" id="3.40.190.10">
    <property type="entry name" value="Periplasmic binding protein-like II"/>
    <property type="match status" value="2"/>
</dbReference>
<dbReference type="InterPro" id="IPR050682">
    <property type="entry name" value="ModA/WtpA"/>
</dbReference>
<dbReference type="PANTHER" id="PTHR30632">
    <property type="entry name" value="MOLYBDATE-BINDING PERIPLASMIC PROTEIN"/>
    <property type="match status" value="1"/>
</dbReference>
<dbReference type="PANTHER" id="PTHR30632:SF16">
    <property type="entry name" value="MOLYBDATE_TUNGSTATE-BINDING PROTEIN WTPA"/>
    <property type="match status" value="1"/>
</dbReference>
<dbReference type="Pfam" id="PF13531">
    <property type="entry name" value="SBP_bac_11"/>
    <property type="match status" value="1"/>
</dbReference>
<dbReference type="SUPFAM" id="SSF53850">
    <property type="entry name" value="Periplasmic binding protein-like II"/>
    <property type="match status" value="1"/>
</dbReference>
<accession>Q97Z99</accession>
<proteinExistence type="inferred from homology"/>
<organism>
    <name type="scientific">Saccharolobus solfataricus (strain ATCC 35092 / DSM 1617 / JCM 11322 / P2)</name>
    <name type="common">Sulfolobus solfataricus</name>
    <dbReference type="NCBI Taxonomy" id="273057"/>
    <lineage>
        <taxon>Archaea</taxon>
        <taxon>Thermoproteota</taxon>
        <taxon>Thermoprotei</taxon>
        <taxon>Sulfolobales</taxon>
        <taxon>Sulfolobaceae</taxon>
        <taxon>Saccharolobus</taxon>
    </lineage>
</organism>
<reference key="1">
    <citation type="journal article" date="2001" name="Proc. Natl. Acad. Sci. U.S.A.">
        <title>The complete genome of the crenarchaeon Sulfolobus solfataricus P2.</title>
        <authorList>
            <person name="She Q."/>
            <person name="Singh R.K."/>
            <person name="Confalonieri F."/>
            <person name="Zivanovic Y."/>
            <person name="Allard G."/>
            <person name="Awayez M.J."/>
            <person name="Chan-Weiher C.C.-Y."/>
            <person name="Clausen I.G."/>
            <person name="Curtis B.A."/>
            <person name="De Moors A."/>
            <person name="Erauso G."/>
            <person name="Fletcher C."/>
            <person name="Gordon P.M.K."/>
            <person name="Heikamp-de Jong I."/>
            <person name="Jeffries A.C."/>
            <person name="Kozera C.J."/>
            <person name="Medina N."/>
            <person name="Peng X."/>
            <person name="Thi-Ngoc H.P."/>
            <person name="Redder P."/>
            <person name="Schenk M.E."/>
            <person name="Theriault C."/>
            <person name="Tolstrup N."/>
            <person name="Charlebois R.L."/>
            <person name="Doolittle W.F."/>
            <person name="Duguet M."/>
            <person name="Gaasterland T."/>
            <person name="Garrett R.A."/>
            <person name="Ragan M.A."/>
            <person name="Sensen C.W."/>
            <person name="Van der Oost J."/>
        </authorList>
    </citation>
    <scope>NUCLEOTIDE SEQUENCE [LARGE SCALE GENOMIC DNA]</scope>
    <source>
        <strain>ATCC 35092 / DSM 1617 / JCM 11322 / P2</strain>
    </source>
</reference>
<comment type="similarity">
    <text evidence="3">Belongs to the bacterial solute-binding protein 1 family. WtpA subfamily.</text>
</comment>
<sequence>MLEKNLLPEILLAIHMPLNKGLTRVKAIVIIIVVIIAVIAGVVGYYLINHPSNSVTTSSSSTTTSSSLSSTSISSSTTNITSSQGITVFVAGAYLAILNYLADQFQNATEIPVHVVGSGSFALASQIASQTPVPANVFIPVAYIQAVELTGSRNPGWAIAFLSDQMTIVYSNYTTKSPYWSQLYSNYTMAMETNNTKYWYNFFYLLTTRFSLGIANPNTDPEGLYAYLILQMASYLYANHNISYFVHLVKANPNVKVAPSTANYVAPLKAGTLDFTFSYVSYAVSQGLEYLKLPPWLSFGYYPNETTWYSQFAYNISVNGQTLTIHGNPVYLYITIPLNASNIQTAYQFIGFVLGHESQLTRFNVIPIQPALLYNETSNIPQPILNLLKSGELKYAGNFSEV</sequence>
<evidence type="ECO:0000255" key="1"/>
<evidence type="ECO:0000256" key="2">
    <source>
        <dbReference type="SAM" id="MobiDB-lite"/>
    </source>
</evidence>
<evidence type="ECO:0000305" key="3"/>
<feature type="signal peptide" evidence="1">
    <location>
        <begin position="1"/>
        <end position="44"/>
    </location>
</feature>
<feature type="chain" id="PRO_0000159726" description="Uncharacterized solute-binding protein SSO1031">
    <location>
        <begin position="45"/>
        <end position="402"/>
    </location>
</feature>
<feature type="region of interest" description="Disordered" evidence="2">
    <location>
        <begin position="53"/>
        <end position="79"/>
    </location>
</feature>
<protein>
    <recommendedName>
        <fullName>Uncharacterized solute-binding protein SSO1031</fullName>
    </recommendedName>
</protein>
<gene>
    <name type="ordered locus">SSO1031</name>
</gene>
<keyword id="KW-1185">Reference proteome</keyword>
<keyword id="KW-0732">Signal</keyword>